<protein>
    <recommendedName>
        <fullName>Replicating protein</fullName>
    </recommendedName>
</protein>
<evidence type="ECO:0000256" key="1">
    <source>
        <dbReference type="SAM" id="MobiDB-lite"/>
    </source>
</evidence>
<comment type="function">
    <text>Required for replication. It likely regulates pTAR copy number.</text>
</comment>
<reference key="1">
    <citation type="journal article" date="1988" name="J. Bacteriol.">
        <title>Minimal region necessary for autonomous replication of pTAR.</title>
        <authorList>
            <person name="Gallie D.R."/>
            <person name="Kado C.I."/>
        </authorList>
    </citation>
    <scope>NUCLEOTIDE SEQUENCE [GENOMIC DNA]</scope>
</reference>
<sequence>MFQQIGAVQAKSGTDEPAHPCEKFPPERKCEAVFWKPLPRHEAREILLAARKYELAMKQPGKRTGPLGHVALEVLDYLTNLVDFGNGRLDPSISTIMEKIGRAESCMSALYPNRQRGRRPAGAADKQRLPLEPAGARPRALLGKYVRKAAPLPDDAAQARQERHDTIKAHMDSLSPADRLRETVEDRTRAEQLAGYVERAAQNRPSGPRKAARRRQQSRCSFTTPNRPRRTLPSSHPQKFGGTKGRKAFE</sequence>
<geneLocation type="plasmid">
    <name>pTAR</name>
</geneLocation>
<gene>
    <name type="primary">repA</name>
</gene>
<dbReference type="EMBL" id="M21299">
    <property type="protein sequence ID" value="AAD15307.1"/>
    <property type="molecule type" value="Genomic_DNA"/>
</dbReference>
<dbReference type="PIR" id="A43662">
    <property type="entry name" value="A43662"/>
</dbReference>
<dbReference type="SMR" id="P15394"/>
<dbReference type="GO" id="GO:0006260">
    <property type="term" value="P:DNA replication"/>
    <property type="evidence" value="ECO:0007669"/>
    <property type="project" value="UniProtKB-KW"/>
</dbReference>
<name>REPA_RHIRD</name>
<keyword id="KW-0235">DNA replication</keyword>
<keyword id="KW-0614">Plasmid</keyword>
<accession>P15394</accession>
<proteinExistence type="predicted"/>
<feature type="chain" id="PRO_0000097251" description="Replicating protein">
    <location>
        <begin position="1"/>
        <end position="250"/>
    </location>
</feature>
<feature type="region of interest" description="Disordered" evidence="1">
    <location>
        <begin position="1"/>
        <end position="23"/>
    </location>
</feature>
<feature type="region of interest" description="Disordered" evidence="1">
    <location>
        <begin position="168"/>
        <end position="250"/>
    </location>
</feature>
<feature type="compositionally biased region" description="Basic and acidic residues" evidence="1">
    <location>
        <begin position="13"/>
        <end position="23"/>
    </location>
</feature>
<feature type="compositionally biased region" description="Basic and acidic residues" evidence="1">
    <location>
        <begin position="178"/>
        <end position="190"/>
    </location>
</feature>
<feature type="compositionally biased region" description="Polar residues" evidence="1">
    <location>
        <begin position="218"/>
        <end position="237"/>
    </location>
</feature>
<organism>
    <name type="scientific">Rhizobium radiobacter</name>
    <name type="common">Agrobacterium tumefaciens</name>
    <name type="synonym">Agrobacterium radiobacter</name>
    <dbReference type="NCBI Taxonomy" id="358"/>
    <lineage>
        <taxon>Bacteria</taxon>
        <taxon>Pseudomonadati</taxon>
        <taxon>Pseudomonadota</taxon>
        <taxon>Alphaproteobacteria</taxon>
        <taxon>Hyphomicrobiales</taxon>
        <taxon>Rhizobiaceae</taxon>
        <taxon>Rhizobium/Agrobacterium group</taxon>
        <taxon>Agrobacterium</taxon>
        <taxon>Agrobacterium tumefaciens complex</taxon>
    </lineage>
</organism>